<organism>
    <name type="scientific">Sphingopyxis alaskensis (strain DSM 13593 / LMG 18877 / RB2256)</name>
    <name type="common">Sphingomonas alaskensis</name>
    <dbReference type="NCBI Taxonomy" id="317655"/>
    <lineage>
        <taxon>Bacteria</taxon>
        <taxon>Pseudomonadati</taxon>
        <taxon>Pseudomonadota</taxon>
        <taxon>Alphaproteobacteria</taxon>
        <taxon>Sphingomonadales</taxon>
        <taxon>Sphingomonadaceae</taxon>
        <taxon>Sphingopyxis</taxon>
    </lineage>
</organism>
<feature type="chain" id="PRO_0000306714" description="Small ribosomal subunit protein uS13">
    <location>
        <begin position="1"/>
        <end position="122"/>
    </location>
</feature>
<feature type="region of interest" description="Disordered" evidence="2">
    <location>
        <begin position="95"/>
        <end position="122"/>
    </location>
</feature>
<gene>
    <name evidence="1" type="primary">rpsM</name>
    <name type="ordered locus">Sala_0567</name>
</gene>
<reference key="1">
    <citation type="journal article" date="2009" name="Proc. Natl. Acad. Sci. U.S.A.">
        <title>The genomic basis of trophic strategy in marine bacteria.</title>
        <authorList>
            <person name="Lauro F.M."/>
            <person name="McDougald D."/>
            <person name="Thomas T."/>
            <person name="Williams T.J."/>
            <person name="Egan S."/>
            <person name="Rice S."/>
            <person name="DeMaere M.Z."/>
            <person name="Ting L."/>
            <person name="Ertan H."/>
            <person name="Johnson J."/>
            <person name="Ferriera S."/>
            <person name="Lapidus A."/>
            <person name="Anderson I."/>
            <person name="Kyrpides N."/>
            <person name="Munk A.C."/>
            <person name="Detter C."/>
            <person name="Han C.S."/>
            <person name="Brown M.V."/>
            <person name="Robb F.T."/>
            <person name="Kjelleberg S."/>
            <person name="Cavicchioli R."/>
        </authorList>
    </citation>
    <scope>NUCLEOTIDE SEQUENCE [LARGE SCALE GENOMIC DNA]</scope>
    <source>
        <strain>DSM 13593 / LMG 18877 / RB2256</strain>
    </source>
</reference>
<keyword id="KW-1185">Reference proteome</keyword>
<keyword id="KW-0687">Ribonucleoprotein</keyword>
<keyword id="KW-0689">Ribosomal protein</keyword>
<keyword id="KW-0694">RNA-binding</keyword>
<keyword id="KW-0699">rRNA-binding</keyword>
<keyword id="KW-0820">tRNA-binding</keyword>
<dbReference type="EMBL" id="CP000356">
    <property type="protein sequence ID" value="ABF52288.1"/>
    <property type="molecule type" value="Genomic_DNA"/>
</dbReference>
<dbReference type="RefSeq" id="WP_011540878.1">
    <property type="nucleotide sequence ID" value="NC_008048.1"/>
</dbReference>
<dbReference type="SMR" id="Q1GVN4"/>
<dbReference type="STRING" id="317655.Sala_0567"/>
<dbReference type="KEGG" id="sal:Sala_0567"/>
<dbReference type="eggNOG" id="COG0099">
    <property type="taxonomic scope" value="Bacteria"/>
</dbReference>
<dbReference type="HOGENOM" id="CLU_103849_1_2_5"/>
<dbReference type="OrthoDB" id="9803610at2"/>
<dbReference type="Proteomes" id="UP000006578">
    <property type="component" value="Chromosome"/>
</dbReference>
<dbReference type="GO" id="GO:0005829">
    <property type="term" value="C:cytosol"/>
    <property type="evidence" value="ECO:0007669"/>
    <property type="project" value="TreeGrafter"/>
</dbReference>
<dbReference type="GO" id="GO:0015935">
    <property type="term" value="C:small ribosomal subunit"/>
    <property type="evidence" value="ECO:0007669"/>
    <property type="project" value="TreeGrafter"/>
</dbReference>
<dbReference type="GO" id="GO:0019843">
    <property type="term" value="F:rRNA binding"/>
    <property type="evidence" value="ECO:0007669"/>
    <property type="project" value="UniProtKB-UniRule"/>
</dbReference>
<dbReference type="GO" id="GO:0003735">
    <property type="term" value="F:structural constituent of ribosome"/>
    <property type="evidence" value="ECO:0007669"/>
    <property type="project" value="InterPro"/>
</dbReference>
<dbReference type="GO" id="GO:0000049">
    <property type="term" value="F:tRNA binding"/>
    <property type="evidence" value="ECO:0007669"/>
    <property type="project" value="UniProtKB-UniRule"/>
</dbReference>
<dbReference type="GO" id="GO:0006412">
    <property type="term" value="P:translation"/>
    <property type="evidence" value="ECO:0007669"/>
    <property type="project" value="UniProtKB-UniRule"/>
</dbReference>
<dbReference type="FunFam" id="1.10.8.50:FF:000001">
    <property type="entry name" value="30S ribosomal protein S13"/>
    <property type="match status" value="1"/>
</dbReference>
<dbReference type="FunFam" id="4.10.910.10:FF:000001">
    <property type="entry name" value="30S ribosomal protein S13"/>
    <property type="match status" value="1"/>
</dbReference>
<dbReference type="Gene3D" id="1.10.8.50">
    <property type="match status" value="1"/>
</dbReference>
<dbReference type="Gene3D" id="4.10.910.10">
    <property type="entry name" value="30s ribosomal protein s13, domain 2"/>
    <property type="match status" value="1"/>
</dbReference>
<dbReference type="HAMAP" id="MF_01315">
    <property type="entry name" value="Ribosomal_uS13"/>
    <property type="match status" value="1"/>
</dbReference>
<dbReference type="InterPro" id="IPR027437">
    <property type="entry name" value="Rbsml_uS13_C"/>
</dbReference>
<dbReference type="InterPro" id="IPR001892">
    <property type="entry name" value="Ribosomal_uS13"/>
</dbReference>
<dbReference type="InterPro" id="IPR010979">
    <property type="entry name" value="Ribosomal_uS13-like_H2TH"/>
</dbReference>
<dbReference type="InterPro" id="IPR019980">
    <property type="entry name" value="Ribosomal_uS13_bac-type"/>
</dbReference>
<dbReference type="InterPro" id="IPR018269">
    <property type="entry name" value="Ribosomal_uS13_CS"/>
</dbReference>
<dbReference type="NCBIfam" id="TIGR03631">
    <property type="entry name" value="uS13_bact"/>
    <property type="match status" value="1"/>
</dbReference>
<dbReference type="PANTHER" id="PTHR10871">
    <property type="entry name" value="30S RIBOSOMAL PROTEIN S13/40S RIBOSOMAL PROTEIN S18"/>
    <property type="match status" value="1"/>
</dbReference>
<dbReference type="PANTHER" id="PTHR10871:SF1">
    <property type="entry name" value="SMALL RIBOSOMAL SUBUNIT PROTEIN US13M"/>
    <property type="match status" value="1"/>
</dbReference>
<dbReference type="Pfam" id="PF00416">
    <property type="entry name" value="Ribosomal_S13"/>
    <property type="match status" value="1"/>
</dbReference>
<dbReference type="PIRSF" id="PIRSF002134">
    <property type="entry name" value="Ribosomal_S13"/>
    <property type="match status" value="1"/>
</dbReference>
<dbReference type="SUPFAM" id="SSF46946">
    <property type="entry name" value="S13-like H2TH domain"/>
    <property type="match status" value="1"/>
</dbReference>
<dbReference type="PROSITE" id="PS00646">
    <property type="entry name" value="RIBOSOMAL_S13_1"/>
    <property type="match status" value="1"/>
</dbReference>
<dbReference type="PROSITE" id="PS50159">
    <property type="entry name" value="RIBOSOMAL_S13_2"/>
    <property type="match status" value="1"/>
</dbReference>
<name>RS13_SPHAL</name>
<protein>
    <recommendedName>
        <fullName evidence="1">Small ribosomal subunit protein uS13</fullName>
    </recommendedName>
    <alternativeName>
        <fullName evidence="3">30S ribosomal protein S13</fullName>
    </alternativeName>
</protein>
<evidence type="ECO:0000255" key="1">
    <source>
        <dbReference type="HAMAP-Rule" id="MF_01315"/>
    </source>
</evidence>
<evidence type="ECO:0000256" key="2">
    <source>
        <dbReference type="SAM" id="MobiDB-lite"/>
    </source>
</evidence>
<evidence type="ECO:0000305" key="3"/>
<comment type="function">
    <text evidence="1">Located at the top of the head of the 30S subunit, it contacts several helices of the 16S rRNA. In the 70S ribosome it contacts the 23S rRNA (bridge B1a) and protein L5 of the 50S subunit (bridge B1b), connecting the 2 subunits; these bridges are implicated in subunit movement. Contacts the tRNAs in the A and P-sites.</text>
</comment>
<comment type="subunit">
    <text evidence="1">Part of the 30S ribosomal subunit. Forms a loose heterodimer with protein S19. Forms two bridges to the 50S subunit in the 70S ribosome.</text>
</comment>
<comment type="similarity">
    <text evidence="1">Belongs to the universal ribosomal protein uS13 family.</text>
</comment>
<proteinExistence type="inferred from homology"/>
<sequence length="122" mass="13653">MARIAGVNLPTNKRVIIALTYIHGIGRKTAVDIADKLGIDHGRRVQDLSDAEVLQIRETIDADHTVEGDLRRNTAMNIKRLMDLACYRGLRHRKGLPVRGQRTHTNARTRKGKAKPIAGKKK</sequence>
<accession>Q1GVN4</accession>